<keyword id="KW-0963">Cytoplasm</keyword>
<keyword id="KW-0378">Hydrolase</keyword>
<keyword id="KW-0479">Metal-binding</keyword>
<keyword id="KW-0533">Nickel</keyword>
<keyword id="KW-1185">Reference proteome</keyword>
<gene>
    <name evidence="1" type="primary">ureC</name>
    <name type="ordered locus">PSHAa1759</name>
</gene>
<reference key="1">
    <citation type="journal article" date="2005" name="Genome Res.">
        <title>Coping with cold: the genome of the versatile marine Antarctica bacterium Pseudoalteromonas haloplanktis TAC125.</title>
        <authorList>
            <person name="Medigue C."/>
            <person name="Krin E."/>
            <person name="Pascal G."/>
            <person name="Barbe V."/>
            <person name="Bernsel A."/>
            <person name="Bertin P.N."/>
            <person name="Cheung F."/>
            <person name="Cruveiller S."/>
            <person name="D'Amico S."/>
            <person name="Duilio A."/>
            <person name="Fang G."/>
            <person name="Feller G."/>
            <person name="Ho C."/>
            <person name="Mangenot S."/>
            <person name="Marino G."/>
            <person name="Nilsson J."/>
            <person name="Parrilli E."/>
            <person name="Rocha E.P.C."/>
            <person name="Rouy Z."/>
            <person name="Sekowska A."/>
            <person name="Tutino M.L."/>
            <person name="Vallenet D."/>
            <person name="von Heijne G."/>
            <person name="Danchin A."/>
        </authorList>
    </citation>
    <scope>NUCLEOTIDE SEQUENCE [LARGE SCALE GENOMIC DNA]</scope>
    <source>
        <strain>TAC 125</strain>
    </source>
</reference>
<dbReference type="EC" id="3.5.1.5" evidence="1"/>
<dbReference type="EMBL" id="CR954246">
    <property type="protein sequence ID" value="CAI86831.1"/>
    <property type="molecule type" value="Genomic_DNA"/>
</dbReference>
<dbReference type="SMR" id="Q3IH68"/>
<dbReference type="STRING" id="326442.PSHAa1759"/>
<dbReference type="KEGG" id="pha:PSHAa1759"/>
<dbReference type="eggNOG" id="COG0804">
    <property type="taxonomic scope" value="Bacteria"/>
</dbReference>
<dbReference type="HOGENOM" id="CLU_000980_0_0_6"/>
<dbReference type="BioCyc" id="PHAL326442:PSHA_RS08635-MONOMER"/>
<dbReference type="UniPathway" id="UPA00258">
    <property type="reaction ID" value="UER00370"/>
</dbReference>
<dbReference type="Proteomes" id="UP000006843">
    <property type="component" value="Chromosome I"/>
</dbReference>
<dbReference type="GO" id="GO:0005737">
    <property type="term" value="C:cytoplasm"/>
    <property type="evidence" value="ECO:0007669"/>
    <property type="project" value="UniProtKB-SubCell"/>
</dbReference>
<dbReference type="GO" id="GO:0016151">
    <property type="term" value="F:nickel cation binding"/>
    <property type="evidence" value="ECO:0007669"/>
    <property type="project" value="UniProtKB-UniRule"/>
</dbReference>
<dbReference type="GO" id="GO:0009039">
    <property type="term" value="F:urease activity"/>
    <property type="evidence" value="ECO:0007669"/>
    <property type="project" value="UniProtKB-UniRule"/>
</dbReference>
<dbReference type="GO" id="GO:0043419">
    <property type="term" value="P:urea catabolic process"/>
    <property type="evidence" value="ECO:0007669"/>
    <property type="project" value="UniProtKB-UniRule"/>
</dbReference>
<dbReference type="CDD" id="cd00375">
    <property type="entry name" value="Urease_alpha"/>
    <property type="match status" value="1"/>
</dbReference>
<dbReference type="Gene3D" id="3.20.20.140">
    <property type="entry name" value="Metal-dependent hydrolases"/>
    <property type="match status" value="1"/>
</dbReference>
<dbReference type="Gene3D" id="2.30.40.10">
    <property type="entry name" value="Urease, subunit C, domain 1"/>
    <property type="match status" value="1"/>
</dbReference>
<dbReference type="HAMAP" id="MF_01953">
    <property type="entry name" value="Urease_alpha"/>
    <property type="match status" value="1"/>
</dbReference>
<dbReference type="InterPro" id="IPR006680">
    <property type="entry name" value="Amidohydro-rel"/>
</dbReference>
<dbReference type="InterPro" id="IPR011059">
    <property type="entry name" value="Metal-dep_hydrolase_composite"/>
</dbReference>
<dbReference type="InterPro" id="IPR032466">
    <property type="entry name" value="Metal_Hydrolase"/>
</dbReference>
<dbReference type="InterPro" id="IPR011612">
    <property type="entry name" value="Urease_alpha_N_dom"/>
</dbReference>
<dbReference type="InterPro" id="IPR050112">
    <property type="entry name" value="Urease_alpha_subunit"/>
</dbReference>
<dbReference type="InterPro" id="IPR005848">
    <property type="entry name" value="Urease_asu"/>
</dbReference>
<dbReference type="InterPro" id="IPR017951">
    <property type="entry name" value="Urease_asu_c"/>
</dbReference>
<dbReference type="InterPro" id="IPR029754">
    <property type="entry name" value="Urease_Ni-bd"/>
</dbReference>
<dbReference type="NCBIfam" id="NF009685">
    <property type="entry name" value="PRK13206.1"/>
    <property type="match status" value="1"/>
</dbReference>
<dbReference type="NCBIfam" id="NF009686">
    <property type="entry name" value="PRK13207.1"/>
    <property type="match status" value="1"/>
</dbReference>
<dbReference type="NCBIfam" id="TIGR01792">
    <property type="entry name" value="urease_alph"/>
    <property type="match status" value="1"/>
</dbReference>
<dbReference type="PANTHER" id="PTHR43440">
    <property type="entry name" value="UREASE"/>
    <property type="match status" value="1"/>
</dbReference>
<dbReference type="PANTHER" id="PTHR43440:SF1">
    <property type="entry name" value="UREASE"/>
    <property type="match status" value="1"/>
</dbReference>
<dbReference type="Pfam" id="PF01979">
    <property type="entry name" value="Amidohydro_1"/>
    <property type="match status" value="1"/>
</dbReference>
<dbReference type="Pfam" id="PF00449">
    <property type="entry name" value="Urease_alpha"/>
    <property type="match status" value="1"/>
</dbReference>
<dbReference type="PRINTS" id="PR01752">
    <property type="entry name" value="UREASE"/>
</dbReference>
<dbReference type="SUPFAM" id="SSF51338">
    <property type="entry name" value="Composite domain of metallo-dependent hydrolases"/>
    <property type="match status" value="2"/>
</dbReference>
<dbReference type="SUPFAM" id="SSF51556">
    <property type="entry name" value="Metallo-dependent hydrolases"/>
    <property type="match status" value="1"/>
</dbReference>
<dbReference type="PROSITE" id="PS01120">
    <property type="entry name" value="UREASE_1"/>
    <property type="match status" value="1"/>
</dbReference>
<dbReference type="PROSITE" id="PS51368">
    <property type="entry name" value="UREASE_3"/>
    <property type="match status" value="1"/>
</dbReference>
<protein>
    <recommendedName>
        <fullName evidence="1">Urease subunit alpha</fullName>
        <ecNumber evidence="1">3.5.1.5</ecNumber>
    </recommendedName>
    <alternativeName>
        <fullName evidence="1">Urea amidohydrolase subunit alpha</fullName>
    </alternativeName>
</protein>
<accession>Q3IH68</accession>
<evidence type="ECO:0000255" key="1">
    <source>
        <dbReference type="HAMAP-Rule" id="MF_01953"/>
    </source>
</evidence>
<name>URE1_PSET1</name>
<sequence>MKISRQAYADMYGPTTGDRIRLGDTELWVEIEHDHTHYGEEVKFGGGKVIRDGMGQSQRCDDAVMDTVITNAVIIDWWGIIKADVGLKNGRIAAIGKSGNPDTQPDIDIIIGPGTEIIAGEGQILTAGGVDTHVHYICPQQVDEALMSGLTTMIGGGTGPATGSVATTHTPGPWHLGKMMQAVDDLPINIGFLGKGSASTPEALEQQIKAGAMSLKIHEDWGAAPASISNALDVADRYDIQVAIHADSLNESGFVQDTLEAFKDRCIHTYHTEGAGGGHAPDIIVACAMPNVLPSSTNPTRPYTINTVDEHLDMLMGCHHLDPNIPEDVAFADSRIRRETIAAEDILHDMGVISMMSSDSQAMGRIGEVVCRTWQTAHKMRVQRGLLPEDEALGADNFRAKRYIAKYTINPAITHGISHEVGSIEVGKFADLVLWKPPFFGVKPSIILKGGMIAGAAMGDPNAAISTPQPVHYRRMFGALGKAVSATRMTFVSQAAMNTGLEEKLGLKSQLVACKNVRQVRKCDMKLNDACPVLTVDPQTYEVHADGVLLTCEPATELPLAQRYHLF</sequence>
<feature type="chain" id="PRO_0000234166" description="Urease subunit alpha">
    <location>
        <begin position="1"/>
        <end position="567"/>
    </location>
</feature>
<feature type="domain" description="Urease" evidence="1">
    <location>
        <begin position="128"/>
        <end position="567"/>
    </location>
</feature>
<feature type="active site" description="Proton donor" evidence="1">
    <location>
        <position position="319"/>
    </location>
</feature>
<feature type="binding site" evidence="1">
    <location>
        <position position="133"/>
    </location>
    <ligand>
        <name>Ni(2+)</name>
        <dbReference type="ChEBI" id="CHEBI:49786"/>
        <label>1</label>
    </ligand>
</feature>
<feature type="binding site" evidence="1">
    <location>
        <position position="135"/>
    </location>
    <ligand>
        <name>Ni(2+)</name>
        <dbReference type="ChEBI" id="CHEBI:49786"/>
        <label>1</label>
    </ligand>
</feature>
<feature type="binding site" description="via carbamate group" evidence="1">
    <location>
        <position position="216"/>
    </location>
    <ligand>
        <name>Ni(2+)</name>
        <dbReference type="ChEBI" id="CHEBI:49786"/>
        <label>1</label>
    </ligand>
</feature>
<feature type="binding site" description="via carbamate group" evidence="1">
    <location>
        <position position="216"/>
    </location>
    <ligand>
        <name>Ni(2+)</name>
        <dbReference type="ChEBI" id="CHEBI:49786"/>
        <label>2</label>
    </ligand>
</feature>
<feature type="binding site" evidence="1">
    <location>
        <position position="218"/>
    </location>
    <ligand>
        <name>substrate</name>
    </ligand>
</feature>
<feature type="binding site" evidence="1">
    <location>
        <position position="245"/>
    </location>
    <ligand>
        <name>Ni(2+)</name>
        <dbReference type="ChEBI" id="CHEBI:49786"/>
        <label>2</label>
    </ligand>
</feature>
<feature type="binding site" evidence="1">
    <location>
        <position position="271"/>
    </location>
    <ligand>
        <name>Ni(2+)</name>
        <dbReference type="ChEBI" id="CHEBI:49786"/>
        <label>2</label>
    </ligand>
</feature>
<feature type="binding site" evidence="1">
    <location>
        <position position="359"/>
    </location>
    <ligand>
        <name>Ni(2+)</name>
        <dbReference type="ChEBI" id="CHEBI:49786"/>
        <label>1</label>
    </ligand>
</feature>
<feature type="modified residue" description="N6-carboxylysine" evidence="1">
    <location>
        <position position="216"/>
    </location>
</feature>
<proteinExistence type="inferred from homology"/>
<comment type="catalytic activity">
    <reaction evidence="1">
        <text>urea + 2 H2O + H(+) = hydrogencarbonate + 2 NH4(+)</text>
        <dbReference type="Rhea" id="RHEA:20557"/>
        <dbReference type="ChEBI" id="CHEBI:15377"/>
        <dbReference type="ChEBI" id="CHEBI:15378"/>
        <dbReference type="ChEBI" id="CHEBI:16199"/>
        <dbReference type="ChEBI" id="CHEBI:17544"/>
        <dbReference type="ChEBI" id="CHEBI:28938"/>
        <dbReference type="EC" id="3.5.1.5"/>
    </reaction>
</comment>
<comment type="cofactor">
    <cofactor evidence="1">
        <name>Ni cation</name>
        <dbReference type="ChEBI" id="CHEBI:25516"/>
    </cofactor>
    <text evidence="1">Binds 2 nickel ions per subunit.</text>
</comment>
<comment type="pathway">
    <text evidence="1">Nitrogen metabolism; urea degradation; CO(2) and NH(3) from urea (urease route): step 1/1.</text>
</comment>
<comment type="subunit">
    <text evidence="1">Heterotrimer of UreA (gamma), UreB (beta) and UreC (alpha) subunits. Three heterotrimers associate to form the active enzyme.</text>
</comment>
<comment type="subcellular location">
    <subcellularLocation>
        <location evidence="1">Cytoplasm</location>
    </subcellularLocation>
</comment>
<comment type="PTM">
    <text evidence="1">Carboxylation allows a single lysine to coordinate two nickel ions.</text>
</comment>
<comment type="similarity">
    <text evidence="1">Belongs to the metallo-dependent hydrolases superfamily. Urease alpha subunit family.</text>
</comment>
<organism>
    <name type="scientific">Pseudoalteromonas translucida (strain TAC 125)</name>
    <dbReference type="NCBI Taxonomy" id="326442"/>
    <lineage>
        <taxon>Bacteria</taxon>
        <taxon>Pseudomonadati</taxon>
        <taxon>Pseudomonadota</taxon>
        <taxon>Gammaproteobacteria</taxon>
        <taxon>Alteromonadales</taxon>
        <taxon>Pseudoalteromonadaceae</taxon>
        <taxon>Pseudoalteromonas</taxon>
    </lineage>
</organism>